<reference key="1">
    <citation type="journal article" date="2005" name="Nat. Biotechnol.">
        <title>Complete genome sequence of the plant commensal Pseudomonas fluorescens Pf-5.</title>
        <authorList>
            <person name="Paulsen I.T."/>
            <person name="Press C.M."/>
            <person name="Ravel J."/>
            <person name="Kobayashi D.Y."/>
            <person name="Myers G.S.A."/>
            <person name="Mavrodi D.V."/>
            <person name="DeBoy R.T."/>
            <person name="Seshadri R."/>
            <person name="Ren Q."/>
            <person name="Madupu R."/>
            <person name="Dodson R.J."/>
            <person name="Durkin A.S."/>
            <person name="Brinkac L.M."/>
            <person name="Daugherty S.C."/>
            <person name="Sullivan S.A."/>
            <person name="Rosovitz M.J."/>
            <person name="Gwinn M.L."/>
            <person name="Zhou L."/>
            <person name="Schneider D.J."/>
            <person name="Cartinhour S.W."/>
            <person name="Nelson W.C."/>
            <person name="Weidman J."/>
            <person name="Watkins K."/>
            <person name="Tran K."/>
            <person name="Khouri H."/>
            <person name="Pierson E.A."/>
            <person name="Pierson L.S. III"/>
            <person name="Thomashow L.S."/>
            <person name="Loper J.E."/>
        </authorList>
    </citation>
    <scope>NUCLEOTIDE SEQUENCE [LARGE SCALE GENOMIC DNA]</scope>
    <source>
        <strain>ATCC BAA-477 / NRRL B-23932 / Pf-5</strain>
    </source>
</reference>
<comment type="function">
    <text evidence="1">Catalyzes the conversion of 3'-phosphate to a 2',3'-cyclic phosphodiester at the end of RNA. The mechanism of action of the enzyme occurs in 3 steps: (A) adenylation of the enzyme by ATP; (B) transfer of adenylate to an RNA-N3'P to produce RNA-N3'PP5'A; (C) and attack of the adjacent 2'-hydroxyl on the 3'-phosphorus in the diester linkage to produce the cyclic end product. The biological role of this enzyme is unknown but it is likely to function in some aspects of cellular RNA processing.</text>
</comment>
<comment type="catalytic activity">
    <reaction evidence="1">
        <text>a 3'-end 3'-phospho-ribonucleotide-RNA + ATP = a 3'-end 2',3'-cyclophospho-ribonucleotide-RNA + AMP + diphosphate</text>
        <dbReference type="Rhea" id="RHEA:23976"/>
        <dbReference type="Rhea" id="RHEA-COMP:10463"/>
        <dbReference type="Rhea" id="RHEA-COMP:10464"/>
        <dbReference type="ChEBI" id="CHEBI:30616"/>
        <dbReference type="ChEBI" id="CHEBI:33019"/>
        <dbReference type="ChEBI" id="CHEBI:83062"/>
        <dbReference type="ChEBI" id="CHEBI:83064"/>
        <dbReference type="ChEBI" id="CHEBI:456215"/>
        <dbReference type="EC" id="6.5.1.4"/>
    </reaction>
</comment>
<comment type="subcellular location">
    <subcellularLocation>
        <location evidence="1">Cytoplasm</location>
    </subcellularLocation>
</comment>
<comment type="similarity">
    <text evidence="1">Belongs to the RNA 3'-terminal cyclase family. Type 1 subfamily.</text>
</comment>
<gene>
    <name evidence="1" type="primary">rtcA</name>
    <name type="ordered locus">PFL_2308</name>
</gene>
<name>RTCA_PSEF5</name>
<proteinExistence type="inferred from homology"/>
<dbReference type="EC" id="6.5.1.4" evidence="1"/>
<dbReference type="EMBL" id="CP000076">
    <property type="protein sequence ID" value="AAY91581.2"/>
    <property type="molecule type" value="Genomic_DNA"/>
</dbReference>
<dbReference type="RefSeq" id="WP_011060606.1">
    <property type="nucleotide sequence ID" value="NC_004129.6"/>
</dbReference>
<dbReference type="SMR" id="Q4KEB8"/>
<dbReference type="STRING" id="220664.PFL_2308"/>
<dbReference type="KEGG" id="pfl:PFL_2308"/>
<dbReference type="PATRIC" id="fig|220664.5.peg.2348"/>
<dbReference type="eggNOG" id="COG0430">
    <property type="taxonomic scope" value="Bacteria"/>
</dbReference>
<dbReference type="HOGENOM" id="CLU_027882_0_0_6"/>
<dbReference type="Proteomes" id="UP000008540">
    <property type="component" value="Chromosome"/>
</dbReference>
<dbReference type="GO" id="GO:0005737">
    <property type="term" value="C:cytoplasm"/>
    <property type="evidence" value="ECO:0007669"/>
    <property type="project" value="UniProtKB-SubCell"/>
</dbReference>
<dbReference type="GO" id="GO:0005524">
    <property type="term" value="F:ATP binding"/>
    <property type="evidence" value="ECO:0007669"/>
    <property type="project" value="UniProtKB-KW"/>
</dbReference>
<dbReference type="GO" id="GO:0003963">
    <property type="term" value="F:RNA-3'-phosphate cyclase activity"/>
    <property type="evidence" value="ECO:0007669"/>
    <property type="project" value="UniProtKB-UniRule"/>
</dbReference>
<dbReference type="GO" id="GO:0006396">
    <property type="term" value="P:RNA processing"/>
    <property type="evidence" value="ECO:0007669"/>
    <property type="project" value="InterPro"/>
</dbReference>
<dbReference type="CDD" id="cd00874">
    <property type="entry name" value="RNA_Cyclase_Class_II"/>
    <property type="match status" value="1"/>
</dbReference>
<dbReference type="Gene3D" id="3.65.10.20">
    <property type="entry name" value="RNA 3'-terminal phosphate cyclase domain"/>
    <property type="match status" value="1"/>
</dbReference>
<dbReference type="Gene3D" id="3.30.360.20">
    <property type="entry name" value="RNA 3'-terminal phosphate cyclase, insert domain"/>
    <property type="match status" value="1"/>
</dbReference>
<dbReference type="HAMAP" id="MF_00200">
    <property type="entry name" value="RTC"/>
    <property type="match status" value="1"/>
</dbReference>
<dbReference type="InterPro" id="IPR013791">
    <property type="entry name" value="RNA3'-term_phos_cycl_insert"/>
</dbReference>
<dbReference type="InterPro" id="IPR023797">
    <property type="entry name" value="RNA3'_phos_cyclase_dom"/>
</dbReference>
<dbReference type="InterPro" id="IPR037136">
    <property type="entry name" value="RNA3'_phos_cyclase_dom_sf"/>
</dbReference>
<dbReference type="InterPro" id="IPR000228">
    <property type="entry name" value="RNA3'_term_phos_cyc"/>
</dbReference>
<dbReference type="InterPro" id="IPR017770">
    <property type="entry name" value="RNA3'_term_phos_cyc_type_1"/>
</dbReference>
<dbReference type="InterPro" id="IPR020719">
    <property type="entry name" value="RNA3'_term_phos_cycl-like_CS"/>
</dbReference>
<dbReference type="InterPro" id="IPR013792">
    <property type="entry name" value="RNA3'P_cycl/enolpyr_Trfase_a/b"/>
</dbReference>
<dbReference type="InterPro" id="IPR036553">
    <property type="entry name" value="RPTC_insert"/>
</dbReference>
<dbReference type="NCBIfam" id="NF003246">
    <property type="entry name" value="PRK04204.1-2"/>
    <property type="match status" value="1"/>
</dbReference>
<dbReference type="NCBIfam" id="TIGR03399">
    <property type="entry name" value="RNA_3prim_cycl"/>
    <property type="match status" value="1"/>
</dbReference>
<dbReference type="PANTHER" id="PTHR11096">
    <property type="entry name" value="RNA 3' TERMINAL PHOSPHATE CYCLASE"/>
    <property type="match status" value="1"/>
</dbReference>
<dbReference type="PANTHER" id="PTHR11096:SF0">
    <property type="entry name" value="RNA 3'-TERMINAL PHOSPHATE CYCLASE"/>
    <property type="match status" value="1"/>
</dbReference>
<dbReference type="Pfam" id="PF01137">
    <property type="entry name" value="RTC"/>
    <property type="match status" value="1"/>
</dbReference>
<dbReference type="Pfam" id="PF05189">
    <property type="entry name" value="RTC_insert"/>
    <property type="match status" value="1"/>
</dbReference>
<dbReference type="PIRSF" id="PIRSF005378">
    <property type="entry name" value="RNA3'_term_phos_cycl_euk"/>
    <property type="match status" value="1"/>
</dbReference>
<dbReference type="SUPFAM" id="SSF55205">
    <property type="entry name" value="EPT/RTPC-like"/>
    <property type="match status" value="2"/>
</dbReference>
<dbReference type="SUPFAM" id="SSF52913">
    <property type="entry name" value="RNA 3'-terminal phosphate cyclase, RPTC, insert domain"/>
    <property type="match status" value="1"/>
</dbReference>
<dbReference type="PROSITE" id="PS01287">
    <property type="entry name" value="RTC"/>
    <property type="match status" value="1"/>
</dbReference>
<evidence type="ECO:0000255" key="1">
    <source>
        <dbReference type="HAMAP-Rule" id="MF_00200"/>
    </source>
</evidence>
<sequence length="342" mass="36971">MKQDVVELDGAIGGGQVLRSALSLSMLTGKTLRIHNIRARRSRPGLLRQHLTAVLAAAQVCGARSTGAELGSQVLSFEPGPIRGGDYRFAIGTAGSCTLVLQTLLPALLRAPQPSRVSISGGTHNPLAPPVDFLQQAWLPQLRRMGGRVELQLLRHGFVPAGGGELEAFIQPSELQPLHLQERGALLGSRAWALSAGLPEHVAERELRRVHDRLQLPREQLTPVLLDEEYGPGNVLLLEFAFEHLTELFCGFGQNSLRAEKVADGAIDQARDWLDSGAAVAEHLADQLLLPMALAGGGSFTTPCMTEHLQSNIRVIEAFLPVRIEARPLSEQVLQVQCHALS</sequence>
<keyword id="KW-0067">ATP-binding</keyword>
<keyword id="KW-0963">Cytoplasm</keyword>
<keyword id="KW-0436">Ligase</keyword>
<keyword id="KW-0547">Nucleotide-binding</keyword>
<accession>Q4KEB8</accession>
<feature type="chain" id="PRO_0000325188" description="RNA 3'-terminal phosphate cyclase">
    <location>
        <begin position="1"/>
        <end position="342"/>
    </location>
</feature>
<feature type="active site" description="Tele-AMP-histidine intermediate" evidence="1">
    <location>
        <position position="308"/>
    </location>
</feature>
<feature type="binding site" evidence="1">
    <location>
        <position position="102"/>
    </location>
    <ligand>
        <name>ATP</name>
        <dbReference type="ChEBI" id="CHEBI:30616"/>
    </ligand>
</feature>
<feature type="binding site" evidence="1">
    <location>
        <begin position="283"/>
        <end position="287"/>
    </location>
    <ligand>
        <name>ATP</name>
        <dbReference type="ChEBI" id="CHEBI:30616"/>
    </ligand>
</feature>
<organism>
    <name type="scientific">Pseudomonas fluorescens (strain ATCC BAA-477 / NRRL B-23932 / Pf-5)</name>
    <dbReference type="NCBI Taxonomy" id="220664"/>
    <lineage>
        <taxon>Bacteria</taxon>
        <taxon>Pseudomonadati</taxon>
        <taxon>Pseudomonadota</taxon>
        <taxon>Gammaproteobacteria</taxon>
        <taxon>Pseudomonadales</taxon>
        <taxon>Pseudomonadaceae</taxon>
        <taxon>Pseudomonas</taxon>
    </lineage>
</organism>
<protein>
    <recommendedName>
        <fullName evidence="1">RNA 3'-terminal phosphate cyclase</fullName>
        <shortName evidence="1">RNA cyclase</shortName>
        <shortName evidence="1">RNA-3'-phosphate cyclase</shortName>
        <ecNumber evidence="1">6.5.1.4</ecNumber>
    </recommendedName>
</protein>